<organism>
    <name type="scientific">Galago senegalensis</name>
    <name type="common">Northern lesser bushbaby</name>
    <name type="synonym">Senegal bushbaby</name>
    <dbReference type="NCBI Taxonomy" id="9465"/>
    <lineage>
        <taxon>Eukaryota</taxon>
        <taxon>Metazoa</taxon>
        <taxon>Chordata</taxon>
        <taxon>Craniata</taxon>
        <taxon>Vertebrata</taxon>
        <taxon>Euteleostomi</taxon>
        <taxon>Mammalia</taxon>
        <taxon>Eutheria</taxon>
        <taxon>Euarchontoglires</taxon>
        <taxon>Primates</taxon>
        <taxon>Strepsirrhini</taxon>
        <taxon>Lorisiformes</taxon>
        <taxon>Galagidae</taxon>
        <taxon>Galago</taxon>
    </lineage>
</organism>
<feature type="chain" id="PRO_0000183599" description="Cytochrome c oxidase subunit 2">
    <location>
        <begin position="1"/>
        <end position="227"/>
    </location>
</feature>
<feature type="topological domain" description="Mitochondrial intermembrane" evidence="4">
    <location>
        <begin position="1"/>
        <end position="14"/>
    </location>
</feature>
<feature type="transmembrane region" description="Helical; Name=I" evidence="4">
    <location>
        <begin position="15"/>
        <end position="45"/>
    </location>
</feature>
<feature type="topological domain" description="Mitochondrial matrix" evidence="4">
    <location>
        <begin position="46"/>
        <end position="59"/>
    </location>
</feature>
<feature type="transmembrane region" description="Helical; Name=II" evidence="4">
    <location>
        <begin position="60"/>
        <end position="87"/>
    </location>
</feature>
<feature type="topological domain" description="Mitochondrial intermembrane" evidence="4">
    <location>
        <begin position="88"/>
        <end position="227"/>
    </location>
</feature>
<feature type="binding site" evidence="4">
    <location>
        <position position="161"/>
    </location>
    <ligand>
        <name>Cu cation</name>
        <dbReference type="ChEBI" id="CHEBI:23378"/>
        <label>A1</label>
    </ligand>
</feature>
<feature type="binding site" evidence="4">
    <location>
        <position position="196"/>
    </location>
    <ligand>
        <name>Cu cation</name>
        <dbReference type="ChEBI" id="CHEBI:23378"/>
        <label>A1</label>
    </ligand>
</feature>
<feature type="binding site" evidence="4">
    <location>
        <position position="196"/>
    </location>
    <ligand>
        <name>Cu cation</name>
        <dbReference type="ChEBI" id="CHEBI:23378"/>
        <label>A2</label>
    </ligand>
</feature>
<feature type="binding site" evidence="4">
    <location>
        <position position="198"/>
    </location>
    <ligand>
        <name>Cu cation</name>
        <dbReference type="ChEBI" id="CHEBI:23378"/>
        <label>A2</label>
    </ligand>
</feature>
<feature type="binding site" evidence="4">
    <location>
        <position position="198"/>
    </location>
    <ligand>
        <name>Mg(2+)</name>
        <dbReference type="ChEBI" id="CHEBI:18420"/>
        <note>ligand shared with MT-CO1</note>
    </ligand>
</feature>
<feature type="binding site" evidence="4">
    <location>
        <position position="200"/>
    </location>
    <ligand>
        <name>Cu cation</name>
        <dbReference type="ChEBI" id="CHEBI:23378"/>
        <label>A1</label>
    </ligand>
</feature>
<feature type="binding site" evidence="4">
    <location>
        <position position="200"/>
    </location>
    <ligand>
        <name>Cu cation</name>
        <dbReference type="ChEBI" id="CHEBI:23378"/>
        <label>A2</label>
    </ligand>
</feature>
<feature type="binding site" evidence="4">
    <location>
        <position position="204"/>
    </location>
    <ligand>
        <name>Cu cation</name>
        <dbReference type="ChEBI" id="CHEBI:23378"/>
        <label>A2</label>
    </ligand>
</feature>
<feature type="binding site" evidence="4">
    <location>
        <position position="207"/>
    </location>
    <ligand>
        <name>Cu cation</name>
        <dbReference type="ChEBI" id="CHEBI:23378"/>
        <label>A1</label>
    </ligand>
</feature>
<feature type="modified residue" description="Phosphotyrosine" evidence="2">
    <location>
        <position position="218"/>
    </location>
</feature>
<comment type="function">
    <text evidence="3">Component of the cytochrome c oxidase, the last enzyme in the mitochondrial electron transport chain which drives oxidative phosphorylation. The respiratory chain contains 3 multisubunit complexes succinate dehydrogenase (complex II, CII), ubiquinol-cytochrome c oxidoreductase (cytochrome b-c1 complex, complex III, CIII) and cytochrome c oxidase (complex IV, CIV), that cooperate to transfer electrons derived from NADH and succinate to molecular oxygen, creating an electrochemical gradient over the inner membrane that drives transmembrane transport and the ATP synthase. Cytochrome c oxidase is the component of the respiratory chain that catalyzes the reduction of oxygen to water. Electrons originating from reduced cytochrome c in the intermembrane space (IMS) are transferred via the dinuclear copper A center (CU(A)) of subunit 2 and heme A of subunit 1 to the active site in subunit 1, a binuclear center (BNC) formed by heme A3 and copper B (CU(B)). The BNC reduces molecular oxygen to 2 water molecules using 4 electrons from cytochrome c in the IMS and 4 protons from the mitochondrial matrix.</text>
</comment>
<comment type="catalytic activity">
    <reaction evidence="3">
        <text>4 Fe(II)-[cytochrome c] + O2 + 8 H(+)(in) = 4 Fe(III)-[cytochrome c] + 2 H2O + 4 H(+)(out)</text>
        <dbReference type="Rhea" id="RHEA:11436"/>
        <dbReference type="Rhea" id="RHEA-COMP:10350"/>
        <dbReference type="Rhea" id="RHEA-COMP:14399"/>
        <dbReference type="ChEBI" id="CHEBI:15377"/>
        <dbReference type="ChEBI" id="CHEBI:15378"/>
        <dbReference type="ChEBI" id="CHEBI:15379"/>
        <dbReference type="ChEBI" id="CHEBI:29033"/>
        <dbReference type="ChEBI" id="CHEBI:29034"/>
        <dbReference type="EC" id="7.1.1.9"/>
    </reaction>
    <physiologicalReaction direction="left-to-right" evidence="3">
        <dbReference type="Rhea" id="RHEA:11437"/>
    </physiologicalReaction>
</comment>
<comment type="cofactor">
    <cofactor evidence="4">
        <name>Cu cation</name>
        <dbReference type="ChEBI" id="CHEBI:23378"/>
    </cofactor>
    <text evidence="4">Binds a dinuclear copper A center per subunit.</text>
</comment>
<comment type="subunit">
    <text evidence="1 4">Component of the cytochrome c oxidase (complex IV, CIV), a multisubunit enzyme composed of 14 subunits. The complex is composed of a catalytic core of 3 subunits MT-CO1, MT-CO2 and MT-CO3, encoded in the mitochondrial DNA, and 11 supernumerary subunits COX4I, COX5A, COX5B, COX6A, COX6B, COX6C, COX7A, COX7B, COX7C, COX8 and NDUFA4, which are encoded in the nuclear genome. The complex exists as a monomer or a dimer and forms supercomplexes (SCs) in the inner mitochondrial membrane with NADH-ubiquinone oxidoreductase (complex I, CI) and ubiquinol-cytochrome c oxidoreductase (cytochrome b-c1 complex, complex III, CIII), resulting in different assemblies (supercomplex SCI(1)III(2)IV(1) and megacomplex MCI(2)III(2)IV(2)) (By similarity). Found in a complex with TMEM177, COA6, COX18, COX20, SCO1 and SCO2. Interacts with TMEM177 in a COX20-dependent manner. Interacts with COX20. Interacts with COX16 (By similarity).</text>
</comment>
<comment type="subcellular location">
    <subcellularLocation>
        <location evidence="4">Mitochondrion inner membrane</location>
        <topology evidence="4">Multi-pass membrane protein</topology>
    </subcellularLocation>
</comment>
<comment type="similarity">
    <text evidence="5">Belongs to the cytochrome c oxidase subunit 2 family.</text>
</comment>
<geneLocation type="mitochondrion"/>
<proteinExistence type="inferred from homology"/>
<accession>P50688</accession>
<keyword id="KW-0186">Copper</keyword>
<keyword id="KW-0249">Electron transport</keyword>
<keyword id="KW-0460">Magnesium</keyword>
<keyword id="KW-0472">Membrane</keyword>
<keyword id="KW-0479">Metal-binding</keyword>
<keyword id="KW-0496">Mitochondrion</keyword>
<keyword id="KW-0999">Mitochondrion inner membrane</keyword>
<keyword id="KW-0597">Phosphoprotein</keyword>
<keyword id="KW-0679">Respiratory chain</keyword>
<keyword id="KW-1278">Translocase</keyword>
<keyword id="KW-0812">Transmembrane</keyword>
<keyword id="KW-1133">Transmembrane helix</keyword>
<keyword id="KW-0813">Transport</keyword>
<gene>
    <name type="primary">MT-CO2</name>
    <name type="synonym">COII</name>
    <name type="synonym">COX2</name>
    <name type="synonym">COXII</name>
    <name type="synonym">MTCO2</name>
</gene>
<reference key="1">
    <citation type="journal article" date="1991" name="Proc. Natl. Acad. Sci. U.S.A.">
        <title>Molecular phylogeny of the superorder Archonta.</title>
        <authorList>
            <person name="Adkins R.M."/>
            <person name="Honeycutt R.L."/>
        </authorList>
    </citation>
    <scope>NUCLEOTIDE SEQUENCE [GENOMIC DNA]</scope>
</reference>
<evidence type="ECO:0000250" key="1">
    <source>
        <dbReference type="UniProtKB" id="P00403"/>
    </source>
</evidence>
<evidence type="ECO:0000250" key="2">
    <source>
        <dbReference type="UniProtKB" id="P00406"/>
    </source>
</evidence>
<evidence type="ECO:0000250" key="3">
    <source>
        <dbReference type="UniProtKB" id="P00410"/>
    </source>
</evidence>
<evidence type="ECO:0000250" key="4">
    <source>
        <dbReference type="UniProtKB" id="P68530"/>
    </source>
</evidence>
<evidence type="ECO:0000305" key="5"/>
<name>COX2_GALSE</name>
<sequence length="227" mass="25978">MAHAVQYGFQDAAAPIMEELLYFHDHTLMIVFMISSLVLYIISLMLSTELTHTSTMDAQEVETVWTILPAVILILIALPSLRILYMMDEIETPSLTLKTVGHQWYWSYEYTDYDKLCFDSYMTPTPDLEPGDLRLLEVDNRVVLPTEMSIRMLITSEDVLHSWTVPALGIKTDAIPGRLNQATLMTSRVGIYYGQCSEICGANHSYMPIVLELVPLKYFEEWLLKTL</sequence>
<protein>
    <recommendedName>
        <fullName>Cytochrome c oxidase subunit 2</fullName>
        <ecNumber>7.1.1.9</ecNumber>
    </recommendedName>
    <alternativeName>
        <fullName>Cytochrome c oxidase polypeptide II</fullName>
    </alternativeName>
</protein>
<dbReference type="EC" id="7.1.1.9"/>
<dbReference type="EMBL" id="M80905">
    <property type="protein sequence ID" value="AAA68618.1"/>
    <property type="molecule type" value="Genomic_DNA"/>
</dbReference>
<dbReference type="PIR" id="I37077">
    <property type="entry name" value="I37077"/>
</dbReference>
<dbReference type="RefSeq" id="YP_002929299.1">
    <property type="nucleotide sequence ID" value="NC_012761.1"/>
</dbReference>
<dbReference type="SMR" id="P50688"/>
<dbReference type="GeneID" id="7944325"/>
<dbReference type="CTD" id="4513"/>
<dbReference type="GO" id="GO:0005743">
    <property type="term" value="C:mitochondrial inner membrane"/>
    <property type="evidence" value="ECO:0007669"/>
    <property type="project" value="UniProtKB-SubCell"/>
</dbReference>
<dbReference type="GO" id="GO:0045277">
    <property type="term" value="C:respiratory chain complex IV"/>
    <property type="evidence" value="ECO:0000250"/>
    <property type="project" value="UniProtKB"/>
</dbReference>
<dbReference type="GO" id="GO:0005507">
    <property type="term" value="F:copper ion binding"/>
    <property type="evidence" value="ECO:0007669"/>
    <property type="project" value="InterPro"/>
</dbReference>
<dbReference type="GO" id="GO:0004129">
    <property type="term" value="F:cytochrome-c oxidase activity"/>
    <property type="evidence" value="ECO:0007669"/>
    <property type="project" value="UniProtKB-EC"/>
</dbReference>
<dbReference type="GO" id="GO:0042773">
    <property type="term" value="P:ATP synthesis coupled electron transport"/>
    <property type="evidence" value="ECO:0007669"/>
    <property type="project" value="TreeGrafter"/>
</dbReference>
<dbReference type="CDD" id="cd13912">
    <property type="entry name" value="CcO_II_C"/>
    <property type="match status" value="1"/>
</dbReference>
<dbReference type="FunFam" id="1.10.287.90:FF:000001">
    <property type="entry name" value="Cytochrome c oxidase subunit 2"/>
    <property type="match status" value="1"/>
</dbReference>
<dbReference type="FunFam" id="2.60.40.420:FF:000001">
    <property type="entry name" value="Cytochrome c oxidase subunit 2"/>
    <property type="match status" value="1"/>
</dbReference>
<dbReference type="Gene3D" id="1.10.287.90">
    <property type="match status" value="1"/>
</dbReference>
<dbReference type="Gene3D" id="2.60.40.420">
    <property type="entry name" value="Cupredoxins - blue copper proteins"/>
    <property type="match status" value="1"/>
</dbReference>
<dbReference type="InterPro" id="IPR045187">
    <property type="entry name" value="CcO_II"/>
</dbReference>
<dbReference type="InterPro" id="IPR002429">
    <property type="entry name" value="CcO_II-like_C"/>
</dbReference>
<dbReference type="InterPro" id="IPR034210">
    <property type="entry name" value="CcO_II_C"/>
</dbReference>
<dbReference type="InterPro" id="IPR001505">
    <property type="entry name" value="Copper_CuA"/>
</dbReference>
<dbReference type="InterPro" id="IPR008972">
    <property type="entry name" value="Cupredoxin"/>
</dbReference>
<dbReference type="InterPro" id="IPR014222">
    <property type="entry name" value="Cyt_c_oxidase_su2"/>
</dbReference>
<dbReference type="InterPro" id="IPR011759">
    <property type="entry name" value="Cyt_c_oxidase_su2_TM_dom"/>
</dbReference>
<dbReference type="InterPro" id="IPR036257">
    <property type="entry name" value="Cyt_c_oxidase_su2_TM_sf"/>
</dbReference>
<dbReference type="NCBIfam" id="TIGR02866">
    <property type="entry name" value="CoxB"/>
    <property type="match status" value="1"/>
</dbReference>
<dbReference type="PANTHER" id="PTHR22888:SF9">
    <property type="entry name" value="CYTOCHROME C OXIDASE SUBUNIT 2"/>
    <property type="match status" value="1"/>
</dbReference>
<dbReference type="PANTHER" id="PTHR22888">
    <property type="entry name" value="CYTOCHROME C OXIDASE, SUBUNIT II"/>
    <property type="match status" value="1"/>
</dbReference>
<dbReference type="Pfam" id="PF00116">
    <property type="entry name" value="COX2"/>
    <property type="match status" value="1"/>
</dbReference>
<dbReference type="Pfam" id="PF02790">
    <property type="entry name" value="COX2_TM"/>
    <property type="match status" value="1"/>
</dbReference>
<dbReference type="PRINTS" id="PR01166">
    <property type="entry name" value="CYCOXIDASEII"/>
</dbReference>
<dbReference type="SUPFAM" id="SSF49503">
    <property type="entry name" value="Cupredoxins"/>
    <property type="match status" value="1"/>
</dbReference>
<dbReference type="SUPFAM" id="SSF81464">
    <property type="entry name" value="Cytochrome c oxidase subunit II-like, transmembrane region"/>
    <property type="match status" value="1"/>
</dbReference>
<dbReference type="PROSITE" id="PS00078">
    <property type="entry name" value="COX2"/>
    <property type="match status" value="1"/>
</dbReference>
<dbReference type="PROSITE" id="PS50857">
    <property type="entry name" value="COX2_CUA"/>
    <property type="match status" value="1"/>
</dbReference>
<dbReference type="PROSITE" id="PS50999">
    <property type="entry name" value="COX2_TM"/>
    <property type="match status" value="1"/>
</dbReference>